<comment type="similarity">
    <text evidence="1">Belongs to the MEIG1 family.</text>
</comment>
<evidence type="ECO:0000305" key="1"/>
<feature type="chain" id="PRO_0000313029" description="Meiosis expressed gene 1 protein homolog">
    <location>
        <begin position="1"/>
        <end position="89"/>
    </location>
</feature>
<protein>
    <recommendedName>
        <fullName>Meiosis expressed gene 1 protein homolog</fullName>
    </recommendedName>
</protein>
<keyword id="KW-1185">Reference proteome</keyword>
<sequence length="89" mass="10606">MTAVAQKCGPKSVSRPKHWSEEVEEAYRFQCAGYRDAIEYSDIKQKEPERWPHNGYVKKLQRKDGCFVYFDKTRECQDKDVNKTKMYGY</sequence>
<dbReference type="EMBL" id="DS469711">
    <property type="protein sequence ID" value="EDO35032.1"/>
    <property type="molecule type" value="Genomic_DNA"/>
</dbReference>
<dbReference type="RefSeq" id="XP_001627132.1">
    <property type="nucleotide sequence ID" value="XM_001627082.1"/>
</dbReference>
<dbReference type="SMR" id="A7SMR0"/>
<dbReference type="STRING" id="45351.A7SMR0"/>
<dbReference type="EnsemblMetazoa" id="EDO35032">
    <property type="protein sequence ID" value="EDO35032"/>
    <property type="gene ID" value="NEMVEDRAFT_v1g237368"/>
</dbReference>
<dbReference type="eggNOG" id="ENOG502S7BQ">
    <property type="taxonomic scope" value="Eukaryota"/>
</dbReference>
<dbReference type="HOGENOM" id="CLU_160103_0_0_1"/>
<dbReference type="InParanoid" id="A7SMR0"/>
<dbReference type="OMA" id="WPHNGYV"/>
<dbReference type="PhylomeDB" id="A7SMR0"/>
<dbReference type="Proteomes" id="UP000001593">
    <property type="component" value="Unassembled WGS sequence"/>
</dbReference>
<dbReference type="GO" id="GO:0005634">
    <property type="term" value="C:nucleus"/>
    <property type="evidence" value="ECO:0000318"/>
    <property type="project" value="GO_Central"/>
</dbReference>
<dbReference type="InterPro" id="IPR020186">
    <property type="entry name" value="Meiosis-expressed_gene_1"/>
</dbReference>
<dbReference type="PANTHER" id="PTHR17008:SF1">
    <property type="entry name" value="MEIOSIS EXPRESSED GENE 1 PROTEIN HOMOLOG"/>
    <property type="match status" value="1"/>
</dbReference>
<dbReference type="PANTHER" id="PTHR17008">
    <property type="entry name" value="MEIOSIS-EXPRESSED GENE 1 PROTEIN"/>
    <property type="match status" value="1"/>
</dbReference>
<dbReference type="Pfam" id="PF15163">
    <property type="entry name" value="Meiosis_expr"/>
    <property type="match status" value="1"/>
</dbReference>
<proteinExistence type="inferred from homology"/>
<name>MEIG1_NEMVE</name>
<accession>A7SMR0</accession>
<organism>
    <name type="scientific">Nematostella vectensis</name>
    <name type="common">Starlet sea anemone</name>
    <dbReference type="NCBI Taxonomy" id="45351"/>
    <lineage>
        <taxon>Eukaryota</taxon>
        <taxon>Metazoa</taxon>
        <taxon>Cnidaria</taxon>
        <taxon>Anthozoa</taxon>
        <taxon>Hexacorallia</taxon>
        <taxon>Actiniaria</taxon>
        <taxon>Edwardsiidae</taxon>
        <taxon>Nematostella</taxon>
    </lineage>
</organism>
<reference key="1">
    <citation type="journal article" date="2007" name="Science">
        <title>Sea anemone genome reveals ancestral eumetazoan gene repertoire and genomic organization.</title>
        <authorList>
            <person name="Putnam N.H."/>
            <person name="Srivastava M."/>
            <person name="Hellsten U."/>
            <person name="Dirks B."/>
            <person name="Chapman J."/>
            <person name="Salamov A."/>
            <person name="Terry A."/>
            <person name="Shapiro H."/>
            <person name="Lindquist E."/>
            <person name="Kapitonov V.V."/>
            <person name="Jurka J."/>
            <person name="Genikhovich G."/>
            <person name="Grigoriev I.V."/>
            <person name="Lucas S.M."/>
            <person name="Steele R.E."/>
            <person name="Finnerty J.R."/>
            <person name="Technau U."/>
            <person name="Martindale M.Q."/>
            <person name="Rokhsar D.S."/>
        </authorList>
    </citation>
    <scope>NUCLEOTIDE SEQUENCE [LARGE SCALE GENOMIC DNA]</scope>
    <source>
        <strain>CH2 X CH6</strain>
    </source>
</reference>
<gene>
    <name type="ORF">v1g237368</name>
</gene>